<reference key="1">
    <citation type="journal article" date="1998" name="Plant Mol. Biol.">
        <title>The expression of a peroxiredoxin antioxidant gene, AtPer1, in Arabidopsis thaliana is seed-specific and related to dormancy.</title>
        <authorList>
            <person name="Haslekas C."/>
            <person name="Stacy R.A.P."/>
            <person name="Nygaard V."/>
            <person name="Culianez-Macia F.A."/>
            <person name="Aalen R.B."/>
        </authorList>
    </citation>
    <scope>NUCLEOTIDE SEQUENCE [GENOMIC DNA]</scope>
    <scope>TISSUE SPECIFICITY</scope>
    <source>
        <strain>cv. Columbia</strain>
    </source>
</reference>
<reference key="2">
    <citation type="journal article" date="2000" name="Nature">
        <title>Sequence and analysis of chromosome 1 of the plant Arabidopsis thaliana.</title>
        <authorList>
            <person name="Theologis A."/>
            <person name="Ecker J.R."/>
            <person name="Palm C.J."/>
            <person name="Federspiel N.A."/>
            <person name="Kaul S."/>
            <person name="White O."/>
            <person name="Alonso J."/>
            <person name="Altafi H."/>
            <person name="Araujo R."/>
            <person name="Bowman C.L."/>
            <person name="Brooks S.Y."/>
            <person name="Buehler E."/>
            <person name="Chan A."/>
            <person name="Chao Q."/>
            <person name="Chen H."/>
            <person name="Cheuk R.F."/>
            <person name="Chin C.W."/>
            <person name="Chung M.K."/>
            <person name="Conn L."/>
            <person name="Conway A.B."/>
            <person name="Conway A.R."/>
            <person name="Creasy T.H."/>
            <person name="Dewar K."/>
            <person name="Dunn P."/>
            <person name="Etgu P."/>
            <person name="Feldblyum T.V."/>
            <person name="Feng J.-D."/>
            <person name="Fong B."/>
            <person name="Fujii C.Y."/>
            <person name="Gill J.E."/>
            <person name="Goldsmith A.D."/>
            <person name="Haas B."/>
            <person name="Hansen N.F."/>
            <person name="Hughes B."/>
            <person name="Huizar L."/>
            <person name="Hunter J.L."/>
            <person name="Jenkins J."/>
            <person name="Johnson-Hopson C."/>
            <person name="Khan S."/>
            <person name="Khaykin E."/>
            <person name="Kim C.J."/>
            <person name="Koo H.L."/>
            <person name="Kremenetskaia I."/>
            <person name="Kurtz D.B."/>
            <person name="Kwan A."/>
            <person name="Lam B."/>
            <person name="Langin-Hooper S."/>
            <person name="Lee A."/>
            <person name="Lee J.M."/>
            <person name="Lenz C.A."/>
            <person name="Li J.H."/>
            <person name="Li Y.-P."/>
            <person name="Lin X."/>
            <person name="Liu S.X."/>
            <person name="Liu Z.A."/>
            <person name="Luros J.S."/>
            <person name="Maiti R."/>
            <person name="Marziali A."/>
            <person name="Militscher J."/>
            <person name="Miranda M."/>
            <person name="Nguyen M."/>
            <person name="Nierman W.C."/>
            <person name="Osborne B.I."/>
            <person name="Pai G."/>
            <person name="Peterson J."/>
            <person name="Pham P.K."/>
            <person name="Rizzo M."/>
            <person name="Rooney T."/>
            <person name="Rowley D."/>
            <person name="Sakano H."/>
            <person name="Salzberg S.L."/>
            <person name="Schwartz J.R."/>
            <person name="Shinn P."/>
            <person name="Southwick A.M."/>
            <person name="Sun H."/>
            <person name="Tallon L.J."/>
            <person name="Tambunga G."/>
            <person name="Toriumi M.J."/>
            <person name="Town C.D."/>
            <person name="Utterback T."/>
            <person name="Van Aken S."/>
            <person name="Vaysberg M."/>
            <person name="Vysotskaia V.S."/>
            <person name="Walker M."/>
            <person name="Wu D."/>
            <person name="Yu G."/>
            <person name="Fraser C.M."/>
            <person name="Venter J.C."/>
            <person name="Davis R.W."/>
        </authorList>
    </citation>
    <scope>NUCLEOTIDE SEQUENCE [LARGE SCALE GENOMIC DNA]</scope>
    <source>
        <strain>cv. Columbia</strain>
    </source>
</reference>
<reference key="3">
    <citation type="journal article" date="2017" name="Plant J.">
        <title>Araport11: a complete reannotation of the Arabidopsis thaliana reference genome.</title>
        <authorList>
            <person name="Cheng C.Y."/>
            <person name="Krishnakumar V."/>
            <person name="Chan A.P."/>
            <person name="Thibaud-Nissen F."/>
            <person name="Schobel S."/>
            <person name="Town C.D."/>
        </authorList>
    </citation>
    <scope>GENOME REANNOTATION</scope>
    <source>
        <strain>cv. Columbia</strain>
    </source>
</reference>
<reference key="4">
    <citation type="journal article" date="2003" name="Science">
        <title>Empirical analysis of transcriptional activity in the Arabidopsis genome.</title>
        <authorList>
            <person name="Yamada K."/>
            <person name="Lim J."/>
            <person name="Dale J.M."/>
            <person name="Chen H."/>
            <person name="Shinn P."/>
            <person name="Palm C.J."/>
            <person name="Southwick A.M."/>
            <person name="Wu H.C."/>
            <person name="Kim C.J."/>
            <person name="Nguyen M."/>
            <person name="Pham P.K."/>
            <person name="Cheuk R.F."/>
            <person name="Karlin-Newmann G."/>
            <person name="Liu S.X."/>
            <person name="Lam B."/>
            <person name="Sakano H."/>
            <person name="Wu T."/>
            <person name="Yu G."/>
            <person name="Miranda M."/>
            <person name="Quach H.L."/>
            <person name="Tripp M."/>
            <person name="Chang C.H."/>
            <person name="Lee J.M."/>
            <person name="Toriumi M.J."/>
            <person name="Chan M.M."/>
            <person name="Tang C.C."/>
            <person name="Onodera C.S."/>
            <person name="Deng J.M."/>
            <person name="Akiyama K."/>
            <person name="Ansari Y."/>
            <person name="Arakawa T."/>
            <person name="Banh J."/>
            <person name="Banno F."/>
            <person name="Bowser L."/>
            <person name="Brooks S.Y."/>
            <person name="Carninci P."/>
            <person name="Chao Q."/>
            <person name="Choy N."/>
            <person name="Enju A."/>
            <person name="Goldsmith A.D."/>
            <person name="Gurjal M."/>
            <person name="Hansen N.F."/>
            <person name="Hayashizaki Y."/>
            <person name="Johnson-Hopson C."/>
            <person name="Hsuan V.W."/>
            <person name="Iida K."/>
            <person name="Karnes M."/>
            <person name="Khan S."/>
            <person name="Koesema E."/>
            <person name="Ishida J."/>
            <person name="Jiang P.X."/>
            <person name="Jones T."/>
            <person name="Kawai J."/>
            <person name="Kamiya A."/>
            <person name="Meyers C."/>
            <person name="Nakajima M."/>
            <person name="Narusaka M."/>
            <person name="Seki M."/>
            <person name="Sakurai T."/>
            <person name="Satou M."/>
            <person name="Tamse R."/>
            <person name="Vaysberg M."/>
            <person name="Wallender E.K."/>
            <person name="Wong C."/>
            <person name="Yamamura Y."/>
            <person name="Yuan S."/>
            <person name="Shinozaki K."/>
            <person name="Davis R.W."/>
            <person name="Theologis A."/>
            <person name="Ecker J.R."/>
        </authorList>
    </citation>
    <scope>NUCLEOTIDE SEQUENCE [LARGE SCALE MRNA]</scope>
    <source>
        <strain>cv. Columbia</strain>
    </source>
</reference>
<reference key="5">
    <citation type="submission" date="2004-06" db="EMBL/GenBank/DDBJ databases">
        <title>Arabidopsis ORF clones.</title>
        <authorList>
            <person name="Cheuk R.F."/>
            <person name="Chen H."/>
            <person name="Kim C.J."/>
            <person name="Shinn P."/>
            <person name="Ecker J.R."/>
        </authorList>
    </citation>
    <scope>NUCLEOTIDE SEQUENCE [LARGE SCALE MRNA]</scope>
    <source>
        <strain>cv. Columbia</strain>
    </source>
</reference>
<reference key="6">
    <citation type="submission" date="1994-09" db="EMBL/GenBank/DDBJ databases">
        <title>The Arabidopsis thaliana transcribed genome: the GDR cDNA program.</title>
        <authorList>
            <person name="Raynal M."/>
            <person name="Grellet F."/>
            <person name="Laudie M."/>
            <person name="Meyer Y."/>
            <person name="Cooke R."/>
            <person name="Delseny M."/>
        </authorList>
    </citation>
    <scope>NUCLEOTIDE SEQUENCE [LARGE SCALE MRNA] OF 1-115</scope>
    <source>
        <strain>cv. Columbia</strain>
        <tissue>Green siliques</tissue>
    </source>
</reference>
<reference key="7">
    <citation type="journal article" date="2003" name="Plant Mol. Biol.">
        <title>ABI3 mediates expression of the peroxiredoxin antioxidant AtPER1 gene and induction by oxidative stress.</title>
        <authorList>
            <person name="Haslekas C."/>
            <person name="Grini P.E."/>
            <person name="Nordgard S.H."/>
            <person name="Thorstensen T."/>
            <person name="Viken M.K."/>
            <person name="Nygaard V."/>
            <person name="Aalen R.B."/>
        </authorList>
    </citation>
    <scope>INDUCTION</scope>
    <scope>TISSUE SPECIFICITY</scope>
    <scope>DEVELOPMENTAL STAGE</scope>
</reference>
<reference key="8">
    <citation type="journal article" date="2003" name="Plant Physiol.">
        <title>Seed 1-cysteine peroxiredoxin antioxidants are not involved in dormancy, but contribute to inhibition of germination during stress.</title>
        <authorList>
            <person name="Haslekas C."/>
            <person name="Viken M.K."/>
            <person name="Grini P.E."/>
            <person name="Nygaard V."/>
            <person name="Nordgard S.H."/>
            <person name="Meza T.J."/>
            <person name="Aalen R.B."/>
        </authorList>
    </citation>
    <scope>FUNCTION</scope>
    <scope>SUBCELLULAR LOCATION</scope>
</reference>
<reference key="9">
    <citation type="journal article" date="2005" name="Free Radic. Biol. Med.">
        <title>The plant multigenic family of thiol peroxidases.</title>
        <authorList>
            <person name="Rouhier N."/>
            <person name="Jacquot J.-P."/>
        </authorList>
    </citation>
    <scope>GENE FAMILY ORGANIZATION</scope>
    <scope>NOMENCLATURE</scope>
</reference>
<keyword id="KW-0049">Antioxidant</keyword>
<keyword id="KW-0963">Cytoplasm</keyword>
<keyword id="KW-0539">Nucleus</keyword>
<keyword id="KW-0560">Oxidoreductase</keyword>
<keyword id="KW-0575">Peroxidase</keyword>
<keyword id="KW-0676">Redox-active center</keyword>
<keyword id="KW-1185">Reference proteome</keyword>
<keyword id="KW-0346">Stress response</keyword>
<sequence>MPGITLGDTVPNLEVETTHDKFKLHDYFANSWTVLFSHPGDFTPVCTTELGAMAKYAHEFDKRGVKLLGLSCDDVQSHKDWIKDIEAFNHGSKVNYPIIADPNKEIIPQLNMIDPIENGPSRALHIVGPDSKIKLSFLYPSTTGRNMDEVLRALDSLLMASKHNNKIATPVNWKPDQPVVISPAVSDEEAKKMFPQGFKTADLPSKKGYLRHTEVS</sequence>
<proteinExistence type="evidence at transcript level"/>
<dbReference type="EC" id="1.11.1.24" evidence="2"/>
<dbReference type="EMBL" id="Y12089">
    <property type="protein sequence ID" value="CAA72804.1"/>
    <property type="molecule type" value="Genomic_DNA"/>
</dbReference>
<dbReference type="EMBL" id="AC023673">
    <property type="protein sequence ID" value="AAF79536.1"/>
    <property type="molecule type" value="Genomic_DNA"/>
</dbReference>
<dbReference type="EMBL" id="CP002684">
    <property type="protein sequence ID" value="AEE32252.1"/>
    <property type="molecule type" value="Genomic_DNA"/>
</dbReference>
<dbReference type="EMBL" id="BT003916">
    <property type="protein sequence ID" value="AAO41963.1"/>
    <property type="molecule type" value="mRNA"/>
</dbReference>
<dbReference type="EMBL" id="BT014873">
    <property type="protein sequence ID" value="AAT41856.1"/>
    <property type="molecule type" value="mRNA"/>
</dbReference>
<dbReference type="EMBL" id="Z37278">
    <property type="protein sequence ID" value="CAA85539.1"/>
    <property type="molecule type" value="mRNA"/>
</dbReference>
<dbReference type="RefSeq" id="NP_175247.1">
    <property type="nucleotide sequence ID" value="NM_103709.4"/>
</dbReference>
<dbReference type="SMR" id="O04005"/>
<dbReference type="FunCoup" id="O04005">
    <property type="interactions" value="1314"/>
</dbReference>
<dbReference type="STRING" id="3702.O04005"/>
<dbReference type="PeroxiBase" id="4362">
    <property type="entry name" value="At1CysPrx"/>
</dbReference>
<dbReference type="PaxDb" id="3702-AT1G48130.1"/>
<dbReference type="ProteomicsDB" id="234913"/>
<dbReference type="EnsemblPlants" id="AT1G48130.1">
    <property type="protein sequence ID" value="AT1G48130.1"/>
    <property type="gene ID" value="AT1G48130"/>
</dbReference>
<dbReference type="GeneID" id="841231"/>
<dbReference type="Gramene" id="AT1G48130.1">
    <property type="protein sequence ID" value="AT1G48130.1"/>
    <property type="gene ID" value="AT1G48130"/>
</dbReference>
<dbReference type="KEGG" id="ath:AT1G48130"/>
<dbReference type="Araport" id="AT1G48130"/>
<dbReference type="TAIR" id="AT1G48130">
    <property type="gene designation" value="PER1"/>
</dbReference>
<dbReference type="eggNOG" id="KOG0854">
    <property type="taxonomic scope" value="Eukaryota"/>
</dbReference>
<dbReference type="HOGENOM" id="CLU_042529_4_1_1"/>
<dbReference type="InParanoid" id="O04005"/>
<dbReference type="OMA" id="HGPMNIP"/>
<dbReference type="PhylomeDB" id="O04005"/>
<dbReference type="BioCyc" id="ARA:AT1G48130-MONOMER"/>
<dbReference type="PRO" id="PR:O04005"/>
<dbReference type="Proteomes" id="UP000006548">
    <property type="component" value="Chromosome 1"/>
</dbReference>
<dbReference type="ExpressionAtlas" id="O04005">
    <property type="expression patterns" value="baseline and differential"/>
</dbReference>
<dbReference type="GO" id="GO:0005737">
    <property type="term" value="C:cytoplasm"/>
    <property type="evidence" value="ECO:0007669"/>
    <property type="project" value="UniProtKB-SubCell"/>
</dbReference>
<dbReference type="GO" id="GO:0005634">
    <property type="term" value="C:nucleus"/>
    <property type="evidence" value="ECO:0007669"/>
    <property type="project" value="UniProtKB-SubCell"/>
</dbReference>
<dbReference type="GO" id="GO:0008379">
    <property type="term" value="F:thioredoxin peroxidase activity"/>
    <property type="evidence" value="ECO:0000250"/>
    <property type="project" value="TAIR"/>
</dbReference>
<dbReference type="GO" id="GO:0010231">
    <property type="term" value="P:maintenance of seed dormancy"/>
    <property type="evidence" value="ECO:0000304"/>
    <property type="project" value="TAIR"/>
</dbReference>
<dbReference type="GO" id="GO:0009269">
    <property type="term" value="P:response to desiccation"/>
    <property type="evidence" value="ECO:0000304"/>
    <property type="project" value="TAIR"/>
</dbReference>
<dbReference type="CDD" id="cd03016">
    <property type="entry name" value="PRX_1cys"/>
    <property type="match status" value="1"/>
</dbReference>
<dbReference type="FunFam" id="3.30.1020.10:FF:000001">
    <property type="entry name" value="1-Cys peroxiredoxin"/>
    <property type="match status" value="1"/>
</dbReference>
<dbReference type="FunFam" id="3.40.30.10:FF:000011">
    <property type="entry name" value="Peroxiredoxin PRX1"/>
    <property type="match status" value="1"/>
</dbReference>
<dbReference type="Gene3D" id="3.30.1020.10">
    <property type="entry name" value="Antioxidant, Horf6, Chain A, domain2"/>
    <property type="match status" value="1"/>
</dbReference>
<dbReference type="Gene3D" id="3.40.30.10">
    <property type="entry name" value="Glutaredoxin"/>
    <property type="match status" value="1"/>
</dbReference>
<dbReference type="InterPro" id="IPR000866">
    <property type="entry name" value="AhpC/TSA"/>
</dbReference>
<dbReference type="InterPro" id="IPR024706">
    <property type="entry name" value="Peroxiredoxin_AhpC-typ"/>
</dbReference>
<dbReference type="InterPro" id="IPR019479">
    <property type="entry name" value="Peroxiredoxin_C"/>
</dbReference>
<dbReference type="InterPro" id="IPR045020">
    <property type="entry name" value="PRX_1cys"/>
</dbReference>
<dbReference type="InterPro" id="IPR036249">
    <property type="entry name" value="Thioredoxin-like_sf"/>
</dbReference>
<dbReference type="InterPro" id="IPR013766">
    <property type="entry name" value="Thioredoxin_domain"/>
</dbReference>
<dbReference type="PANTHER" id="PTHR43503">
    <property type="entry name" value="MCG48959-RELATED"/>
    <property type="match status" value="1"/>
</dbReference>
<dbReference type="PANTHER" id="PTHR43503:SF4">
    <property type="entry name" value="PEROXIREDOXIN-6"/>
    <property type="match status" value="1"/>
</dbReference>
<dbReference type="Pfam" id="PF10417">
    <property type="entry name" value="1-cysPrx_C"/>
    <property type="match status" value="1"/>
</dbReference>
<dbReference type="Pfam" id="PF00578">
    <property type="entry name" value="AhpC-TSA"/>
    <property type="match status" value="1"/>
</dbReference>
<dbReference type="PIRSF" id="PIRSF000239">
    <property type="entry name" value="AHPC"/>
    <property type="match status" value="1"/>
</dbReference>
<dbReference type="SUPFAM" id="SSF52833">
    <property type="entry name" value="Thioredoxin-like"/>
    <property type="match status" value="1"/>
</dbReference>
<dbReference type="PROSITE" id="PS51352">
    <property type="entry name" value="THIOREDOXIN_2"/>
    <property type="match status" value="1"/>
</dbReference>
<comment type="function">
    <text evidence="2 5">Thiol-specific peroxidase that catalyzes the reduction of hydrogen peroxide and organic hydroperoxides to water and alcohols, respectively (By similarity). Seems to contribute to the inhibition of germination during stress (PubMed:14526116).</text>
</comment>
<comment type="catalytic activity">
    <reaction evidence="2">
        <text>a hydroperoxide + [thioredoxin]-dithiol = an alcohol + [thioredoxin]-disulfide + H2O</text>
        <dbReference type="Rhea" id="RHEA:62620"/>
        <dbReference type="Rhea" id="RHEA-COMP:10698"/>
        <dbReference type="Rhea" id="RHEA-COMP:10700"/>
        <dbReference type="ChEBI" id="CHEBI:15377"/>
        <dbReference type="ChEBI" id="CHEBI:29950"/>
        <dbReference type="ChEBI" id="CHEBI:30879"/>
        <dbReference type="ChEBI" id="CHEBI:35924"/>
        <dbReference type="ChEBI" id="CHEBI:50058"/>
        <dbReference type="EC" id="1.11.1.24"/>
    </reaction>
</comment>
<comment type="subcellular location">
    <subcellularLocation>
        <location evidence="5">Nucleus</location>
    </subcellularLocation>
    <subcellularLocation>
        <location evidence="5">Cytoplasm</location>
    </subcellularLocation>
</comment>
<comment type="tissue specificity">
    <text evidence="6 7">Predominantly expressed in seed. Expressed in endosperm, embryo and aleurone cells. Also detected in young seedlings, abscission zones, stem branching points.</text>
</comment>
<comment type="developmental stage">
    <text evidence="6">Expressed during the late globular stage and late torpedo stage of the embryo, and in distinct cells of unfertilized and fertilized ovules.</text>
</comment>
<comment type="induction">
    <text evidence="6">By abscisic acid (ABA) and oxidative stress.</text>
</comment>
<comment type="miscellaneous">
    <text evidence="1">The active site is a conserved redox-active cysteine residue, the peroxidatic cysteine (C(P)), which makes the nucleophilic attack on the peroxide substrate. The peroxide oxidizes the C(P)-SH to cysteine sulfenic acid (C(P)-SOH), which then reacts with another cysteine residue, the resolving cysteine (C(R)), to form a disulfide bridge. The disulfide is subsequently reduced by an appropriate electron donor to complete the catalytic cycle. In this 1-Cys peroxiredoxin, no C(R) is present and C(P) instead forms a disulfide with a cysteine from another protein or with a small thiol molecule.</text>
</comment>
<comment type="similarity">
    <text evidence="8">Belongs to the peroxiredoxin family. Prx6 subfamily.</text>
</comment>
<feature type="chain" id="PRO_0000135107" description="1-Cys peroxiredoxin PER1">
    <location>
        <begin position="1"/>
        <end position="216"/>
    </location>
</feature>
<feature type="domain" description="Thioredoxin" evidence="4">
    <location>
        <begin position="4"/>
        <end position="159"/>
    </location>
</feature>
<feature type="short sequence motif" description="Bipartite nuclear localization signal" evidence="3">
    <location>
        <begin position="191"/>
        <end position="214"/>
    </location>
</feature>
<feature type="active site" description="Cysteine sulfenic acid (-SOH) intermediate" evidence="2">
    <location>
        <position position="46"/>
    </location>
</feature>
<feature type="sequence conflict" description="In Ref. 6; CAA85539." evidence="8" ref="6">
    <original>K</original>
    <variation>T</variation>
    <location>
        <position position="23"/>
    </location>
</feature>
<feature type="sequence conflict" description="In Ref. 6; CAA85539." evidence="8" ref="6">
    <original>S</original>
    <variation>T</variation>
    <location>
        <position position="77"/>
    </location>
</feature>
<feature type="sequence conflict" description="In Ref. 6; CAA85539." evidence="8" ref="6">
    <original>I</original>
    <variation>N</variation>
    <location>
        <position position="107"/>
    </location>
</feature>
<feature type="sequence conflict" description="In Ref. 4; AAT41856 and 5; AAO41963." evidence="8" ref="4 5">
    <original>H</original>
    <variation>R</variation>
    <location>
        <position position="212"/>
    </location>
</feature>
<protein>
    <recommendedName>
        <fullName>1-Cys peroxiredoxin PER1</fullName>
        <ecNumber evidence="2">1.11.1.24</ecNumber>
    </recommendedName>
    <alternativeName>
        <fullName>Rehydrin homolog</fullName>
    </alternativeName>
    <alternativeName>
        <fullName>Thioredoxin peroxidase</fullName>
    </alternativeName>
    <alternativeName>
        <fullName evidence="8">Thioredoxin-dependent peroxiredoxin</fullName>
    </alternativeName>
</protein>
<name>REHY_ARATH</name>
<gene>
    <name type="primary">PER1</name>
    <name type="ordered locus">At1g48130</name>
    <name type="ORF">F21D18.15</name>
</gene>
<evidence type="ECO:0000250" key="1">
    <source>
        <dbReference type="UniProtKB" id="O35244"/>
    </source>
</evidence>
<evidence type="ECO:0000250" key="2">
    <source>
        <dbReference type="UniProtKB" id="P30041"/>
    </source>
</evidence>
<evidence type="ECO:0000255" key="3"/>
<evidence type="ECO:0000255" key="4">
    <source>
        <dbReference type="PROSITE-ProRule" id="PRU00691"/>
    </source>
</evidence>
<evidence type="ECO:0000269" key="5">
    <source>
    </source>
</evidence>
<evidence type="ECO:0000269" key="6">
    <source>
    </source>
</evidence>
<evidence type="ECO:0000269" key="7">
    <source>
    </source>
</evidence>
<evidence type="ECO:0000305" key="8"/>
<accession>O04005</accession>
<accession>Q42319</accession>
<accession>Q84WE3</accession>
<organism>
    <name type="scientific">Arabidopsis thaliana</name>
    <name type="common">Mouse-ear cress</name>
    <dbReference type="NCBI Taxonomy" id="3702"/>
    <lineage>
        <taxon>Eukaryota</taxon>
        <taxon>Viridiplantae</taxon>
        <taxon>Streptophyta</taxon>
        <taxon>Embryophyta</taxon>
        <taxon>Tracheophyta</taxon>
        <taxon>Spermatophyta</taxon>
        <taxon>Magnoliopsida</taxon>
        <taxon>eudicotyledons</taxon>
        <taxon>Gunneridae</taxon>
        <taxon>Pentapetalae</taxon>
        <taxon>rosids</taxon>
        <taxon>malvids</taxon>
        <taxon>Brassicales</taxon>
        <taxon>Brassicaceae</taxon>
        <taxon>Camelineae</taxon>
        <taxon>Arabidopsis</taxon>
    </lineage>
</organism>